<proteinExistence type="inferred from homology"/>
<dbReference type="EC" id="6.3.3.1" evidence="1"/>
<dbReference type="EMBL" id="AM040264">
    <property type="protein sequence ID" value="CAJ10687.1"/>
    <property type="molecule type" value="Genomic_DNA"/>
</dbReference>
<dbReference type="RefSeq" id="WP_002963853.1">
    <property type="nucleotide sequence ID" value="NZ_KN046823.1"/>
</dbReference>
<dbReference type="SMR" id="Q2YN59"/>
<dbReference type="STRING" id="359391.BAB1_0731"/>
<dbReference type="GeneID" id="93016888"/>
<dbReference type="KEGG" id="bmf:BAB1_0731"/>
<dbReference type="PATRIC" id="fig|359391.11.peg.3044"/>
<dbReference type="HOGENOM" id="CLU_047116_0_0_5"/>
<dbReference type="PhylomeDB" id="Q2YN59"/>
<dbReference type="UniPathway" id="UPA00074">
    <property type="reaction ID" value="UER00129"/>
</dbReference>
<dbReference type="PRO" id="PR:Q2YN59"/>
<dbReference type="Proteomes" id="UP000002719">
    <property type="component" value="Chromosome I"/>
</dbReference>
<dbReference type="GO" id="GO:0005829">
    <property type="term" value="C:cytosol"/>
    <property type="evidence" value="ECO:0007669"/>
    <property type="project" value="TreeGrafter"/>
</dbReference>
<dbReference type="GO" id="GO:0005524">
    <property type="term" value="F:ATP binding"/>
    <property type="evidence" value="ECO:0007669"/>
    <property type="project" value="UniProtKB-KW"/>
</dbReference>
<dbReference type="GO" id="GO:0004637">
    <property type="term" value="F:phosphoribosylamine-glycine ligase activity"/>
    <property type="evidence" value="ECO:0007669"/>
    <property type="project" value="TreeGrafter"/>
</dbReference>
<dbReference type="GO" id="GO:0004641">
    <property type="term" value="F:phosphoribosylformylglycinamidine cyclo-ligase activity"/>
    <property type="evidence" value="ECO:0007669"/>
    <property type="project" value="UniProtKB-UniRule"/>
</dbReference>
<dbReference type="GO" id="GO:0006189">
    <property type="term" value="P:'de novo' IMP biosynthetic process"/>
    <property type="evidence" value="ECO:0007669"/>
    <property type="project" value="UniProtKB-UniRule"/>
</dbReference>
<dbReference type="GO" id="GO:0046084">
    <property type="term" value="P:adenine biosynthetic process"/>
    <property type="evidence" value="ECO:0007669"/>
    <property type="project" value="TreeGrafter"/>
</dbReference>
<dbReference type="CDD" id="cd02196">
    <property type="entry name" value="PurM"/>
    <property type="match status" value="1"/>
</dbReference>
<dbReference type="FunFam" id="3.30.1330.10:FF:000001">
    <property type="entry name" value="Phosphoribosylformylglycinamidine cyclo-ligase"/>
    <property type="match status" value="1"/>
</dbReference>
<dbReference type="FunFam" id="3.90.650.10:FF:000019">
    <property type="entry name" value="Trifunctional purine biosynthetic protein adenosine-3"/>
    <property type="match status" value="1"/>
</dbReference>
<dbReference type="Gene3D" id="3.90.650.10">
    <property type="entry name" value="PurM-like C-terminal domain"/>
    <property type="match status" value="1"/>
</dbReference>
<dbReference type="Gene3D" id="3.30.1330.10">
    <property type="entry name" value="PurM-like, N-terminal domain"/>
    <property type="match status" value="1"/>
</dbReference>
<dbReference type="HAMAP" id="MF_00741">
    <property type="entry name" value="AIRS"/>
    <property type="match status" value="1"/>
</dbReference>
<dbReference type="InterPro" id="IPR010918">
    <property type="entry name" value="PurM-like_C_dom"/>
</dbReference>
<dbReference type="InterPro" id="IPR036676">
    <property type="entry name" value="PurM-like_C_sf"/>
</dbReference>
<dbReference type="InterPro" id="IPR016188">
    <property type="entry name" value="PurM-like_N"/>
</dbReference>
<dbReference type="InterPro" id="IPR036921">
    <property type="entry name" value="PurM-like_N_sf"/>
</dbReference>
<dbReference type="InterPro" id="IPR004733">
    <property type="entry name" value="PurM_cligase"/>
</dbReference>
<dbReference type="NCBIfam" id="TIGR00878">
    <property type="entry name" value="purM"/>
    <property type="match status" value="1"/>
</dbReference>
<dbReference type="PANTHER" id="PTHR10520:SF12">
    <property type="entry name" value="TRIFUNCTIONAL PURINE BIOSYNTHETIC PROTEIN ADENOSINE-3"/>
    <property type="match status" value="1"/>
</dbReference>
<dbReference type="PANTHER" id="PTHR10520">
    <property type="entry name" value="TRIFUNCTIONAL PURINE BIOSYNTHETIC PROTEIN ADENOSINE-3-RELATED"/>
    <property type="match status" value="1"/>
</dbReference>
<dbReference type="Pfam" id="PF00586">
    <property type="entry name" value="AIRS"/>
    <property type="match status" value="1"/>
</dbReference>
<dbReference type="Pfam" id="PF02769">
    <property type="entry name" value="AIRS_C"/>
    <property type="match status" value="1"/>
</dbReference>
<dbReference type="SUPFAM" id="SSF56042">
    <property type="entry name" value="PurM C-terminal domain-like"/>
    <property type="match status" value="1"/>
</dbReference>
<dbReference type="SUPFAM" id="SSF55326">
    <property type="entry name" value="PurM N-terminal domain-like"/>
    <property type="match status" value="1"/>
</dbReference>
<organism>
    <name type="scientific">Brucella abortus (strain 2308)</name>
    <dbReference type="NCBI Taxonomy" id="359391"/>
    <lineage>
        <taxon>Bacteria</taxon>
        <taxon>Pseudomonadati</taxon>
        <taxon>Pseudomonadota</taxon>
        <taxon>Alphaproteobacteria</taxon>
        <taxon>Hyphomicrobiales</taxon>
        <taxon>Brucellaceae</taxon>
        <taxon>Brucella/Ochrobactrum group</taxon>
        <taxon>Brucella</taxon>
    </lineage>
</organism>
<reference key="1">
    <citation type="journal article" date="2005" name="Infect. Immun.">
        <title>Whole-genome analyses of speciation events in pathogenic Brucellae.</title>
        <authorList>
            <person name="Chain P.S."/>
            <person name="Comerci D.J."/>
            <person name="Tolmasky M.E."/>
            <person name="Larimer F.W."/>
            <person name="Malfatti S.A."/>
            <person name="Vergez L.M."/>
            <person name="Aguero F."/>
            <person name="Land M.L."/>
            <person name="Ugalde R.A."/>
            <person name="Garcia E."/>
        </authorList>
    </citation>
    <scope>NUCLEOTIDE SEQUENCE [LARGE SCALE GENOMIC DNA]</scope>
    <source>
        <strain>2308</strain>
    </source>
</reference>
<keyword id="KW-0067">ATP-binding</keyword>
<keyword id="KW-0963">Cytoplasm</keyword>
<keyword id="KW-0436">Ligase</keyword>
<keyword id="KW-0547">Nucleotide-binding</keyword>
<keyword id="KW-0658">Purine biosynthesis</keyword>
<keyword id="KW-1185">Reference proteome</keyword>
<comment type="catalytic activity">
    <reaction evidence="1">
        <text>2-formamido-N(1)-(5-O-phospho-beta-D-ribosyl)acetamidine + ATP = 5-amino-1-(5-phospho-beta-D-ribosyl)imidazole + ADP + phosphate + H(+)</text>
        <dbReference type="Rhea" id="RHEA:23032"/>
        <dbReference type="ChEBI" id="CHEBI:15378"/>
        <dbReference type="ChEBI" id="CHEBI:30616"/>
        <dbReference type="ChEBI" id="CHEBI:43474"/>
        <dbReference type="ChEBI" id="CHEBI:137981"/>
        <dbReference type="ChEBI" id="CHEBI:147287"/>
        <dbReference type="ChEBI" id="CHEBI:456216"/>
        <dbReference type="EC" id="6.3.3.1"/>
    </reaction>
</comment>
<comment type="pathway">
    <text evidence="1">Purine metabolism; IMP biosynthesis via de novo pathway; 5-amino-1-(5-phospho-D-ribosyl)imidazole from N(2)-formyl-N(1)-(5-phospho-D-ribosyl)glycinamide: step 2/2.</text>
</comment>
<comment type="subcellular location">
    <subcellularLocation>
        <location evidence="1">Cytoplasm</location>
    </subcellularLocation>
</comment>
<comment type="similarity">
    <text evidence="1">Belongs to the AIR synthase family.</text>
</comment>
<protein>
    <recommendedName>
        <fullName evidence="1">Phosphoribosylformylglycinamidine cyclo-ligase</fullName>
        <ecNumber evidence="1">6.3.3.1</ecNumber>
    </recommendedName>
    <alternativeName>
        <fullName evidence="1">AIR synthase</fullName>
    </alternativeName>
    <alternativeName>
        <fullName evidence="1">AIRS</fullName>
    </alternativeName>
    <alternativeName>
        <fullName evidence="1">Phosphoribosyl-aminoimidazole synthetase</fullName>
    </alternativeName>
</protein>
<accession>Q2YN59</accession>
<name>PUR5_BRUA2</name>
<sequence>MTMENKPAGQNGLTYAQAGVDIDAGNLMVEKIKPLVRSTRRPGADGEIGGFGGLFDLKAAGFKDPVLVAANDGVGTKLKIAIDADIHDTVGIDLVAMCVNDLVVQGAEPLFFLDYYATGKLSPDQGVAIVSGIAEGCRQAGCALIGGETAEMPGMYRDGDYDLAGFAVGAAERDRLLPRGDIAEGDIILGLASSGVHSNGFSLVRRIVELSGLGWKSQAPFQPGATLGEALLTPTRIYVKPLLAAIRACDGIKALAHITGGGFPDNIPRVLPKGLAAEIDLPAIAVPPVFSWLAKTGNVEPNEMLRTFNCGIGMIAVVNPAKVDEVIAALAAEGEKVVTLGRMTRREKDGVIYKGQLAL</sequence>
<feature type="chain" id="PRO_0000258337" description="Phosphoribosylformylglycinamidine cyclo-ligase">
    <location>
        <begin position="1"/>
        <end position="359"/>
    </location>
</feature>
<evidence type="ECO:0000255" key="1">
    <source>
        <dbReference type="HAMAP-Rule" id="MF_00741"/>
    </source>
</evidence>
<gene>
    <name evidence="1" type="primary">purM</name>
    <name type="ordered locus">BAB1_0731</name>
</gene>